<organism>
    <name type="scientific">Cupriavidus pinatubonensis (strain JMP 134 / LMG 1197)</name>
    <name type="common">Cupriavidus necator (strain JMP 134)</name>
    <dbReference type="NCBI Taxonomy" id="264198"/>
    <lineage>
        <taxon>Bacteria</taxon>
        <taxon>Pseudomonadati</taxon>
        <taxon>Pseudomonadota</taxon>
        <taxon>Betaproteobacteria</taxon>
        <taxon>Burkholderiales</taxon>
        <taxon>Burkholderiaceae</taxon>
        <taxon>Cupriavidus</taxon>
    </lineage>
</organism>
<evidence type="ECO:0000255" key="1">
    <source>
        <dbReference type="HAMAP-Rule" id="MF_00323"/>
    </source>
</evidence>
<accession>Q473L7</accession>
<protein>
    <recommendedName>
        <fullName evidence="1">Ferrochelatase</fullName>
        <ecNumber evidence="1">4.98.1.1</ecNumber>
    </recommendedName>
    <alternativeName>
        <fullName evidence="1">Heme synthase</fullName>
    </alternativeName>
    <alternativeName>
        <fullName evidence="1">Protoheme ferro-lyase</fullName>
    </alternativeName>
</protein>
<comment type="function">
    <text evidence="1">Catalyzes the ferrous insertion into protoporphyrin IX.</text>
</comment>
<comment type="catalytic activity">
    <reaction evidence="1">
        <text>heme b + 2 H(+) = protoporphyrin IX + Fe(2+)</text>
        <dbReference type="Rhea" id="RHEA:22584"/>
        <dbReference type="ChEBI" id="CHEBI:15378"/>
        <dbReference type="ChEBI" id="CHEBI:29033"/>
        <dbReference type="ChEBI" id="CHEBI:57306"/>
        <dbReference type="ChEBI" id="CHEBI:60344"/>
        <dbReference type="EC" id="4.98.1.1"/>
    </reaction>
</comment>
<comment type="pathway">
    <text evidence="1">Porphyrin-containing compound metabolism; protoheme biosynthesis; protoheme from protoporphyrin-IX: step 1/1.</text>
</comment>
<comment type="subcellular location">
    <subcellularLocation>
        <location evidence="1">Cytoplasm</location>
    </subcellularLocation>
</comment>
<comment type="similarity">
    <text evidence="1">Belongs to the ferrochelatase family.</text>
</comment>
<reference key="1">
    <citation type="journal article" date="2010" name="PLoS ONE">
        <title>The complete multipartite genome sequence of Cupriavidus necator JMP134, a versatile pollutant degrader.</title>
        <authorList>
            <person name="Lykidis A."/>
            <person name="Perez-Pantoja D."/>
            <person name="Ledger T."/>
            <person name="Mavromatis K."/>
            <person name="Anderson I.J."/>
            <person name="Ivanova N.N."/>
            <person name="Hooper S.D."/>
            <person name="Lapidus A."/>
            <person name="Lucas S."/>
            <person name="Gonzalez B."/>
            <person name="Kyrpides N.C."/>
        </authorList>
    </citation>
    <scope>NUCLEOTIDE SEQUENCE [LARGE SCALE GENOMIC DNA]</scope>
    <source>
        <strain>JMP134 / LMG 1197</strain>
    </source>
</reference>
<keyword id="KW-0963">Cytoplasm</keyword>
<keyword id="KW-0350">Heme biosynthesis</keyword>
<keyword id="KW-0408">Iron</keyword>
<keyword id="KW-0456">Lyase</keyword>
<keyword id="KW-0479">Metal-binding</keyword>
<keyword id="KW-0627">Porphyrin biosynthesis</keyword>
<gene>
    <name evidence="1" type="primary">hemH</name>
    <name type="ordered locus">Reut_A1037</name>
</gene>
<dbReference type="EC" id="4.98.1.1" evidence="1"/>
<dbReference type="EMBL" id="CP000090">
    <property type="protein sequence ID" value="AAZ60416.1"/>
    <property type="molecule type" value="Genomic_DNA"/>
</dbReference>
<dbReference type="SMR" id="Q473L7"/>
<dbReference type="STRING" id="264198.Reut_A1037"/>
<dbReference type="KEGG" id="reu:Reut_A1037"/>
<dbReference type="eggNOG" id="COG0276">
    <property type="taxonomic scope" value="Bacteria"/>
</dbReference>
<dbReference type="HOGENOM" id="CLU_018884_0_0_4"/>
<dbReference type="OrthoDB" id="9809741at2"/>
<dbReference type="UniPathway" id="UPA00252">
    <property type="reaction ID" value="UER00325"/>
</dbReference>
<dbReference type="GO" id="GO:0005737">
    <property type="term" value="C:cytoplasm"/>
    <property type="evidence" value="ECO:0007669"/>
    <property type="project" value="UniProtKB-SubCell"/>
</dbReference>
<dbReference type="GO" id="GO:0004325">
    <property type="term" value="F:ferrochelatase activity"/>
    <property type="evidence" value="ECO:0007669"/>
    <property type="project" value="UniProtKB-UniRule"/>
</dbReference>
<dbReference type="GO" id="GO:0046872">
    <property type="term" value="F:metal ion binding"/>
    <property type="evidence" value="ECO:0007669"/>
    <property type="project" value="UniProtKB-KW"/>
</dbReference>
<dbReference type="GO" id="GO:0006783">
    <property type="term" value="P:heme biosynthetic process"/>
    <property type="evidence" value="ECO:0007669"/>
    <property type="project" value="UniProtKB-UniRule"/>
</dbReference>
<dbReference type="CDD" id="cd00419">
    <property type="entry name" value="Ferrochelatase_C"/>
    <property type="match status" value="1"/>
</dbReference>
<dbReference type="CDD" id="cd03411">
    <property type="entry name" value="Ferrochelatase_N"/>
    <property type="match status" value="1"/>
</dbReference>
<dbReference type="FunFam" id="3.40.50.1400:FF:000002">
    <property type="entry name" value="Ferrochelatase"/>
    <property type="match status" value="1"/>
</dbReference>
<dbReference type="Gene3D" id="3.40.50.1400">
    <property type="match status" value="2"/>
</dbReference>
<dbReference type="HAMAP" id="MF_00323">
    <property type="entry name" value="Ferrochelatase"/>
    <property type="match status" value="1"/>
</dbReference>
<dbReference type="InterPro" id="IPR001015">
    <property type="entry name" value="Ferrochelatase"/>
</dbReference>
<dbReference type="InterPro" id="IPR019772">
    <property type="entry name" value="Ferrochelatase_AS"/>
</dbReference>
<dbReference type="InterPro" id="IPR033644">
    <property type="entry name" value="Ferrochelatase_C"/>
</dbReference>
<dbReference type="InterPro" id="IPR033659">
    <property type="entry name" value="Ferrochelatase_N"/>
</dbReference>
<dbReference type="NCBIfam" id="TIGR00109">
    <property type="entry name" value="hemH"/>
    <property type="match status" value="1"/>
</dbReference>
<dbReference type="PANTHER" id="PTHR11108">
    <property type="entry name" value="FERROCHELATASE"/>
    <property type="match status" value="1"/>
</dbReference>
<dbReference type="PANTHER" id="PTHR11108:SF1">
    <property type="entry name" value="FERROCHELATASE, MITOCHONDRIAL"/>
    <property type="match status" value="1"/>
</dbReference>
<dbReference type="Pfam" id="PF00762">
    <property type="entry name" value="Ferrochelatase"/>
    <property type="match status" value="1"/>
</dbReference>
<dbReference type="SUPFAM" id="SSF53800">
    <property type="entry name" value="Chelatase"/>
    <property type="match status" value="1"/>
</dbReference>
<dbReference type="PROSITE" id="PS00534">
    <property type="entry name" value="FERROCHELATASE"/>
    <property type="match status" value="1"/>
</dbReference>
<proteinExistence type="inferred from homology"/>
<sequence length="371" mass="41341">MTFSPEPAYQHGQAPRTAILLVNLGTPDAPTPKAVGRYLKEFLSDPRVVEIPRLAWLPLLYGVILPLRARASALKYESIWLREAHMTGSPLLVYSERQAHALQRLLNQQGYELTVACAMRYGNPSIASVLEALRRQGTEQVLVLPMYPQYSGTTTATAFDEVFRVLGQWRNQPEIRLVKHFHDHPAYIAALHQQVGAYWAQHGTPDFARGDKLILSFHGVPRRTLELGDPYHCECLKTGRLLGDALGLQPGQYQVTFQSRFGKAEWLQPYTAPTLAELGKVGAGRVDVFCPGFPADCIETLEEIAMEGQTEFMVAGGKTFHFIPCMNDAQPWISALAEIALQHVQGWPLNMPHAHELEARRSRAQTRGAAA</sequence>
<feature type="chain" id="PRO_1000019356" description="Ferrochelatase">
    <location>
        <begin position="1"/>
        <end position="371"/>
    </location>
</feature>
<feature type="binding site" evidence="1">
    <location>
        <position position="218"/>
    </location>
    <ligand>
        <name>Fe cation</name>
        <dbReference type="ChEBI" id="CHEBI:24875"/>
    </ligand>
</feature>
<feature type="binding site" evidence="1">
    <location>
        <position position="299"/>
    </location>
    <ligand>
        <name>Fe cation</name>
        <dbReference type="ChEBI" id="CHEBI:24875"/>
    </ligand>
</feature>
<name>HEMH_CUPPJ</name>